<gene>
    <name evidence="1" type="primary">cyaY</name>
    <name type="ordered locus">CPS_0075</name>
</gene>
<proteinExistence type="inferred from homology"/>
<accession>Q48AW7</accession>
<feature type="chain" id="PRO_1000010926" description="Iron-sulfur cluster assembly protein CyaY">
    <location>
        <begin position="1"/>
        <end position="106"/>
    </location>
</feature>
<reference key="1">
    <citation type="journal article" date="2005" name="Proc. Natl. Acad. Sci. U.S.A.">
        <title>The psychrophilic lifestyle as revealed by the genome sequence of Colwellia psychrerythraea 34H through genomic and proteomic analyses.</title>
        <authorList>
            <person name="Methe B.A."/>
            <person name="Nelson K.E."/>
            <person name="Deming J.W."/>
            <person name="Momen B."/>
            <person name="Melamud E."/>
            <person name="Zhang X."/>
            <person name="Moult J."/>
            <person name="Madupu R."/>
            <person name="Nelson W.C."/>
            <person name="Dodson R.J."/>
            <person name="Brinkac L.M."/>
            <person name="Daugherty S.C."/>
            <person name="Durkin A.S."/>
            <person name="DeBoy R.T."/>
            <person name="Kolonay J.F."/>
            <person name="Sullivan S.A."/>
            <person name="Zhou L."/>
            <person name="Davidsen T.M."/>
            <person name="Wu M."/>
            <person name="Huston A.L."/>
            <person name="Lewis M."/>
            <person name="Weaver B."/>
            <person name="Weidman J.F."/>
            <person name="Khouri H."/>
            <person name="Utterback T.R."/>
            <person name="Feldblyum T.V."/>
            <person name="Fraser C.M."/>
        </authorList>
    </citation>
    <scope>NUCLEOTIDE SEQUENCE [LARGE SCALE GENOMIC DNA]</scope>
    <source>
        <strain>34H / ATCC BAA-681</strain>
    </source>
</reference>
<dbReference type="EMBL" id="CP000083">
    <property type="protein sequence ID" value="AAZ24018.1"/>
    <property type="molecule type" value="Genomic_DNA"/>
</dbReference>
<dbReference type="RefSeq" id="WP_011040950.1">
    <property type="nucleotide sequence ID" value="NC_003910.7"/>
</dbReference>
<dbReference type="SMR" id="Q48AW7"/>
<dbReference type="STRING" id="167879.CPS_0075"/>
<dbReference type="KEGG" id="cps:CPS_0075"/>
<dbReference type="eggNOG" id="COG1965">
    <property type="taxonomic scope" value="Bacteria"/>
</dbReference>
<dbReference type="HOGENOM" id="CLU_080880_3_0_6"/>
<dbReference type="Proteomes" id="UP000000547">
    <property type="component" value="Chromosome"/>
</dbReference>
<dbReference type="GO" id="GO:0005829">
    <property type="term" value="C:cytosol"/>
    <property type="evidence" value="ECO:0007669"/>
    <property type="project" value="TreeGrafter"/>
</dbReference>
<dbReference type="GO" id="GO:0008199">
    <property type="term" value="F:ferric iron binding"/>
    <property type="evidence" value="ECO:0007669"/>
    <property type="project" value="InterPro"/>
</dbReference>
<dbReference type="GO" id="GO:0008198">
    <property type="term" value="F:ferrous iron binding"/>
    <property type="evidence" value="ECO:0007669"/>
    <property type="project" value="TreeGrafter"/>
</dbReference>
<dbReference type="GO" id="GO:0016226">
    <property type="term" value="P:iron-sulfur cluster assembly"/>
    <property type="evidence" value="ECO:0007669"/>
    <property type="project" value="UniProtKB-UniRule"/>
</dbReference>
<dbReference type="Gene3D" id="3.30.920.10">
    <property type="entry name" value="Frataxin/CyaY"/>
    <property type="match status" value="1"/>
</dbReference>
<dbReference type="HAMAP" id="MF_00142">
    <property type="entry name" value="CyaY"/>
    <property type="match status" value="1"/>
</dbReference>
<dbReference type="InterPro" id="IPR047584">
    <property type="entry name" value="CyaY"/>
</dbReference>
<dbReference type="InterPro" id="IPR002908">
    <property type="entry name" value="Frataxin/CyaY"/>
</dbReference>
<dbReference type="InterPro" id="IPR036524">
    <property type="entry name" value="Frataxin/CyaY_sf"/>
</dbReference>
<dbReference type="InterPro" id="IPR020895">
    <property type="entry name" value="Frataxin_CS"/>
</dbReference>
<dbReference type="NCBIfam" id="TIGR03421">
    <property type="entry name" value="FeS_CyaY"/>
    <property type="match status" value="1"/>
</dbReference>
<dbReference type="PANTHER" id="PTHR16821">
    <property type="entry name" value="FRATAXIN"/>
    <property type="match status" value="1"/>
</dbReference>
<dbReference type="PANTHER" id="PTHR16821:SF2">
    <property type="entry name" value="FRATAXIN, MITOCHONDRIAL"/>
    <property type="match status" value="1"/>
</dbReference>
<dbReference type="Pfam" id="PF01491">
    <property type="entry name" value="Frataxin_Cyay"/>
    <property type="match status" value="1"/>
</dbReference>
<dbReference type="SMART" id="SM01219">
    <property type="entry name" value="Frataxin_Cyay"/>
    <property type="match status" value="1"/>
</dbReference>
<dbReference type="SUPFAM" id="SSF55387">
    <property type="entry name" value="Frataxin/Nqo15-like"/>
    <property type="match status" value="1"/>
</dbReference>
<dbReference type="PROSITE" id="PS01344">
    <property type="entry name" value="FRATAXIN_1"/>
    <property type="match status" value="1"/>
</dbReference>
<dbReference type="PROSITE" id="PS50810">
    <property type="entry name" value="FRATAXIN_2"/>
    <property type="match status" value="1"/>
</dbReference>
<name>CYAY_COLP3</name>
<comment type="function">
    <text evidence="1">Involved in iron-sulfur (Fe-S) cluster assembly. May act as a regulator of Fe-S biogenesis.</text>
</comment>
<comment type="similarity">
    <text evidence="1">Belongs to the frataxin family.</text>
</comment>
<sequence length="106" mass="11856">MNDSQYNLIAEALLLAIEEAIEDSGVDIDYEGVGGLLTLTFKNNSKVIINKQAPLHEIWVATKFNGHHFVLNNDSWTDKRSGEEFWQFLSNAVSTQAETELTLSAQ</sequence>
<keyword id="KW-0408">Iron</keyword>
<keyword id="KW-0479">Metal-binding</keyword>
<protein>
    <recommendedName>
        <fullName evidence="1">Iron-sulfur cluster assembly protein CyaY</fullName>
    </recommendedName>
</protein>
<organism>
    <name type="scientific">Colwellia psychrerythraea (strain 34H / ATCC BAA-681)</name>
    <name type="common">Vibrio psychroerythus</name>
    <dbReference type="NCBI Taxonomy" id="167879"/>
    <lineage>
        <taxon>Bacteria</taxon>
        <taxon>Pseudomonadati</taxon>
        <taxon>Pseudomonadota</taxon>
        <taxon>Gammaproteobacteria</taxon>
        <taxon>Alteromonadales</taxon>
        <taxon>Colwelliaceae</taxon>
        <taxon>Colwellia</taxon>
    </lineage>
</organism>
<evidence type="ECO:0000255" key="1">
    <source>
        <dbReference type="HAMAP-Rule" id="MF_00142"/>
    </source>
</evidence>